<organism>
    <name type="scientific">Pelotomaculum thermopropionicum (strain DSM 13744 / JCM 10971 / SI)</name>
    <dbReference type="NCBI Taxonomy" id="370438"/>
    <lineage>
        <taxon>Bacteria</taxon>
        <taxon>Bacillati</taxon>
        <taxon>Bacillota</taxon>
        <taxon>Clostridia</taxon>
        <taxon>Eubacteriales</taxon>
        <taxon>Desulfotomaculaceae</taxon>
        <taxon>Pelotomaculum</taxon>
    </lineage>
</organism>
<accession>A5D5I2</accession>
<dbReference type="EC" id="2.7.7.6" evidence="1"/>
<dbReference type="EMBL" id="AP009389">
    <property type="protein sequence ID" value="BAF58493.1"/>
    <property type="molecule type" value="Genomic_DNA"/>
</dbReference>
<dbReference type="SMR" id="A5D5I2"/>
<dbReference type="STRING" id="370438.PTH_0312"/>
<dbReference type="KEGG" id="pth:PTH_0312"/>
<dbReference type="eggNOG" id="COG0085">
    <property type="taxonomic scope" value="Bacteria"/>
</dbReference>
<dbReference type="HOGENOM" id="CLU_000524_4_1_9"/>
<dbReference type="Proteomes" id="UP000006556">
    <property type="component" value="Chromosome"/>
</dbReference>
<dbReference type="GO" id="GO:0000428">
    <property type="term" value="C:DNA-directed RNA polymerase complex"/>
    <property type="evidence" value="ECO:0007669"/>
    <property type="project" value="UniProtKB-KW"/>
</dbReference>
<dbReference type="GO" id="GO:0003677">
    <property type="term" value="F:DNA binding"/>
    <property type="evidence" value="ECO:0007669"/>
    <property type="project" value="UniProtKB-UniRule"/>
</dbReference>
<dbReference type="GO" id="GO:0003899">
    <property type="term" value="F:DNA-directed RNA polymerase activity"/>
    <property type="evidence" value="ECO:0007669"/>
    <property type="project" value="UniProtKB-UniRule"/>
</dbReference>
<dbReference type="GO" id="GO:0032549">
    <property type="term" value="F:ribonucleoside binding"/>
    <property type="evidence" value="ECO:0007669"/>
    <property type="project" value="InterPro"/>
</dbReference>
<dbReference type="GO" id="GO:0006351">
    <property type="term" value="P:DNA-templated transcription"/>
    <property type="evidence" value="ECO:0007669"/>
    <property type="project" value="UniProtKB-UniRule"/>
</dbReference>
<dbReference type="CDD" id="cd12797">
    <property type="entry name" value="M23_peptidase"/>
    <property type="match status" value="1"/>
</dbReference>
<dbReference type="CDD" id="cd00653">
    <property type="entry name" value="RNA_pol_B_RPB2"/>
    <property type="match status" value="1"/>
</dbReference>
<dbReference type="FunFam" id="3.90.1800.10:FF:000001">
    <property type="entry name" value="DNA-directed RNA polymerase subunit beta"/>
    <property type="match status" value="1"/>
</dbReference>
<dbReference type="Gene3D" id="2.40.50.100">
    <property type="match status" value="1"/>
</dbReference>
<dbReference type="Gene3D" id="2.40.50.150">
    <property type="match status" value="1"/>
</dbReference>
<dbReference type="Gene3D" id="3.90.1100.10">
    <property type="match status" value="1"/>
</dbReference>
<dbReference type="Gene3D" id="2.30.150.10">
    <property type="entry name" value="DNA-directed RNA polymerase, beta subunit, external 1 domain"/>
    <property type="match status" value="1"/>
</dbReference>
<dbReference type="Gene3D" id="2.40.270.10">
    <property type="entry name" value="DNA-directed RNA polymerase, subunit 2, domain 6"/>
    <property type="match status" value="1"/>
</dbReference>
<dbReference type="Gene3D" id="3.90.1800.10">
    <property type="entry name" value="RNA polymerase alpha subunit dimerisation domain"/>
    <property type="match status" value="1"/>
</dbReference>
<dbReference type="Gene3D" id="3.90.1110.10">
    <property type="entry name" value="RNA polymerase Rpb2, domain 2"/>
    <property type="match status" value="1"/>
</dbReference>
<dbReference type="HAMAP" id="MF_01321">
    <property type="entry name" value="RNApol_bact_RpoB"/>
    <property type="match status" value="1"/>
</dbReference>
<dbReference type="InterPro" id="IPR042107">
    <property type="entry name" value="DNA-dir_RNA_pol_bsu_ext_1_sf"/>
</dbReference>
<dbReference type="InterPro" id="IPR019462">
    <property type="entry name" value="DNA-dir_RNA_pol_bsu_external_1"/>
</dbReference>
<dbReference type="InterPro" id="IPR015712">
    <property type="entry name" value="DNA-dir_RNA_pol_su2"/>
</dbReference>
<dbReference type="InterPro" id="IPR007120">
    <property type="entry name" value="DNA-dir_RNAP_su2_dom"/>
</dbReference>
<dbReference type="InterPro" id="IPR037033">
    <property type="entry name" value="DNA-dir_RNAP_su2_hyb_sf"/>
</dbReference>
<dbReference type="InterPro" id="IPR010243">
    <property type="entry name" value="RNA_pol_bsu_bac"/>
</dbReference>
<dbReference type="InterPro" id="IPR007121">
    <property type="entry name" value="RNA_pol_bsu_CS"/>
</dbReference>
<dbReference type="InterPro" id="IPR007644">
    <property type="entry name" value="RNA_pol_bsu_protrusion"/>
</dbReference>
<dbReference type="InterPro" id="IPR007642">
    <property type="entry name" value="RNA_pol_Rpb2_2"/>
</dbReference>
<dbReference type="InterPro" id="IPR037034">
    <property type="entry name" value="RNA_pol_Rpb2_2_sf"/>
</dbReference>
<dbReference type="InterPro" id="IPR007645">
    <property type="entry name" value="RNA_pol_Rpb2_3"/>
</dbReference>
<dbReference type="InterPro" id="IPR007641">
    <property type="entry name" value="RNA_pol_Rpb2_7"/>
</dbReference>
<dbReference type="InterPro" id="IPR014724">
    <property type="entry name" value="RNA_pol_RPB2_OB-fold"/>
</dbReference>
<dbReference type="NCBIfam" id="NF001616">
    <property type="entry name" value="PRK00405.1"/>
    <property type="match status" value="1"/>
</dbReference>
<dbReference type="NCBIfam" id="TIGR02013">
    <property type="entry name" value="rpoB"/>
    <property type="match status" value="1"/>
</dbReference>
<dbReference type="PANTHER" id="PTHR20856">
    <property type="entry name" value="DNA-DIRECTED RNA POLYMERASE I SUBUNIT 2"/>
    <property type="match status" value="1"/>
</dbReference>
<dbReference type="Pfam" id="PF04563">
    <property type="entry name" value="RNA_pol_Rpb2_1"/>
    <property type="match status" value="1"/>
</dbReference>
<dbReference type="Pfam" id="PF04561">
    <property type="entry name" value="RNA_pol_Rpb2_2"/>
    <property type="match status" value="2"/>
</dbReference>
<dbReference type="Pfam" id="PF04565">
    <property type="entry name" value="RNA_pol_Rpb2_3"/>
    <property type="match status" value="1"/>
</dbReference>
<dbReference type="Pfam" id="PF10385">
    <property type="entry name" value="RNA_pol_Rpb2_45"/>
    <property type="match status" value="1"/>
</dbReference>
<dbReference type="Pfam" id="PF00562">
    <property type="entry name" value="RNA_pol_Rpb2_6"/>
    <property type="match status" value="2"/>
</dbReference>
<dbReference type="Pfam" id="PF04560">
    <property type="entry name" value="RNA_pol_Rpb2_7"/>
    <property type="match status" value="1"/>
</dbReference>
<dbReference type="SUPFAM" id="SSF64484">
    <property type="entry name" value="beta and beta-prime subunits of DNA dependent RNA-polymerase"/>
    <property type="match status" value="2"/>
</dbReference>
<dbReference type="PROSITE" id="PS01166">
    <property type="entry name" value="RNA_POL_BETA"/>
    <property type="match status" value="1"/>
</dbReference>
<evidence type="ECO:0000255" key="1">
    <source>
        <dbReference type="HAMAP-Rule" id="MF_01321"/>
    </source>
</evidence>
<sequence>MAYPEKVGARVRYNFGRLREVLDLPNLIEVQRNSYKWFLEEGLREVFQDISPIQDFTGNLVLEFLDYTLGEPKYTVEECKERDVTYAAPLRVKVRLINKETGEVKEQDVFMGDFPLMTEKGTFIINGAERVIVSQLVRSPGVYFDETIDPSGKKLYTATIIPNRGAWLEFETDVNDHIFVRIDRTRKIPATVLVRALGYGTKAQVAELFNEDKNILETLARDNTDSEEEALVEIYKRLRPGEPPTVDSARSLLTSLFFDPKRYDLANVGRYKIQKKLKHGVLYRYGPNPDGKTVFDPYLKKEVPQKREFIRELTKEDIIETIRYLLKLMNGEGQVDDIDHLGNRRLRSVGELLQNQFRIGLSRMERVVRERMTIQDVDVITPQVLINIRPVVAAIKEFFGSSQLSQFMDQTNPLAELTHKRRLSALGPGGLSRERAGFEVRDVHHSHYGRMCPIETPEGPNIGLIGSLSTYARINEFGFIETPYRKVDKENRRVTDEIVYLTADEEEGYVIAQANAPLDEEGRFIEPRVNARSPEIVVVPADRVDYMDVSPKQVFSIATALIPFLEHDDANRALMGANMQRQAVPLLKAQAPLVGTGIEYKAARDSGVVVIAKESGTVEKVTSTHIEIRNDRGYLDRYKLLKFTRSNQGTCVNQKPIVKKGERVEAGQVIADGPSTDYGELALGRNVLVAFMPWEGYNYEDAILVSEKTVKEDYFTSIHIEEYECDARDTKLGPEEITRDIPNVGEEILKDLDDRGIIRVGAEVRPGDILVGKVTPKGETELTAEERLLRAIFGEKAREVRDTSLRVPHGESGKVVDVKVFSRDNGDELPPGVNQLVRVYIAQKRKISEGDKMAGRHGNKGVIARILPEEDMPFLPDGTPIEIVLNPLGVPSRMNIGQVLEAHLGWAAKVLGYYVSTPVFNGASEESIFEALKEAAFKESGLRSFMEKAGLNEEELIGAVETAEKRAGSREALIKEVEGAESSGETIMAAIERTGLTAGMVNRLEEAGMTKKEILGAMKKLLFARSGKMTLYDGRTGEPFDSPITVGYVYMLKLAHLVDDKIHARSTGPYSLVTQQPLGGKAQFGGQRFGEMEVWALEAYGAAYTLQEILTVKSDDVVGRVKTYEAIVKGENVPEPGVPESFKVLIKELQSLGLDVKVLSEDDQEIEIREVEEDIGETAKELGIDLQEGELPEVEEADYSEDVEDEDMFNEEFFNEDFDLEDDE</sequence>
<reference key="1">
    <citation type="journal article" date="2008" name="Genome Res.">
        <title>The genome of Pelotomaculum thermopropionicum reveals niche-associated evolution in anaerobic microbiota.</title>
        <authorList>
            <person name="Kosaka T."/>
            <person name="Kato S."/>
            <person name="Shimoyama T."/>
            <person name="Ishii S."/>
            <person name="Abe T."/>
            <person name="Watanabe K."/>
        </authorList>
    </citation>
    <scope>NUCLEOTIDE SEQUENCE [LARGE SCALE GENOMIC DNA]</scope>
    <source>
        <strain>DSM 13744 / JCM 10971 / SI</strain>
    </source>
</reference>
<proteinExistence type="inferred from homology"/>
<keyword id="KW-0240">DNA-directed RNA polymerase</keyword>
<keyword id="KW-0548">Nucleotidyltransferase</keyword>
<keyword id="KW-1185">Reference proteome</keyword>
<keyword id="KW-0804">Transcription</keyword>
<keyword id="KW-0808">Transferase</keyword>
<name>RPOB_PELTS</name>
<protein>
    <recommendedName>
        <fullName evidence="1">DNA-directed RNA polymerase subunit beta</fullName>
        <shortName evidence="1">RNAP subunit beta</shortName>
        <ecNumber evidence="1">2.7.7.6</ecNumber>
    </recommendedName>
    <alternativeName>
        <fullName evidence="1">RNA polymerase subunit beta</fullName>
    </alternativeName>
    <alternativeName>
        <fullName evidence="1">Transcriptase subunit beta</fullName>
    </alternativeName>
</protein>
<comment type="function">
    <text evidence="1">DNA-dependent RNA polymerase catalyzes the transcription of DNA into RNA using the four ribonucleoside triphosphates as substrates.</text>
</comment>
<comment type="catalytic activity">
    <reaction evidence="1">
        <text>RNA(n) + a ribonucleoside 5'-triphosphate = RNA(n+1) + diphosphate</text>
        <dbReference type="Rhea" id="RHEA:21248"/>
        <dbReference type="Rhea" id="RHEA-COMP:14527"/>
        <dbReference type="Rhea" id="RHEA-COMP:17342"/>
        <dbReference type="ChEBI" id="CHEBI:33019"/>
        <dbReference type="ChEBI" id="CHEBI:61557"/>
        <dbReference type="ChEBI" id="CHEBI:140395"/>
        <dbReference type="EC" id="2.7.7.6"/>
    </reaction>
</comment>
<comment type="subunit">
    <text evidence="1">The RNAP catalytic core consists of 2 alpha, 1 beta, 1 beta' and 1 omega subunit. When a sigma factor is associated with the core the holoenzyme is formed, which can initiate transcription.</text>
</comment>
<comment type="similarity">
    <text evidence="1">Belongs to the RNA polymerase beta chain family.</text>
</comment>
<gene>
    <name evidence="1" type="primary">rpoB</name>
    <name type="ordered locus">PTH_0312</name>
</gene>
<feature type="chain" id="PRO_1000086375" description="DNA-directed RNA polymerase subunit beta">
    <location>
        <begin position="1"/>
        <end position="1224"/>
    </location>
</feature>